<name>RS20_BARBK</name>
<feature type="chain" id="PRO_1000014550" description="Small ribosomal subunit protein bS20">
    <location>
        <begin position="1"/>
        <end position="88"/>
    </location>
</feature>
<feature type="region of interest" description="Disordered" evidence="2">
    <location>
        <begin position="1"/>
        <end position="22"/>
    </location>
</feature>
<reference key="1">
    <citation type="submission" date="2006-12" db="EMBL/GenBank/DDBJ databases">
        <authorList>
            <person name="Hendrix L."/>
            <person name="Mohamoud Y."/>
            <person name="Radune D."/>
            <person name="Shvartsbeyn A."/>
            <person name="Daugherty S."/>
            <person name="Dodson R."/>
            <person name="Durkin A.S."/>
            <person name="Harkins D."/>
            <person name="Huot H."/>
            <person name="Kothari S.P."/>
            <person name="Madupu R."/>
            <person name="Li J."/>
            <person name="Nelson W.C."/>
            <person name="Shrivastava S."/>
            <person name="Giglio M.G."/>
            <person name="Haft D."/>
            <person name="Selengut J."/>
            <person name="Fraser-Ligget C."/>
            <person name="Seshadri R."/>
        </authorList>
    </citation>
    <scope>NUCLEOTIDE SEQUENCE [LARGE SCALE GENOMIC DNA]</scope>
    <source>
        <strain>ATCC 35685 / KC583 / Herrer 020/F12,63</strain>
    </source>
</reference>
<evidence type="ECO:0000255" key="1">
    <source>
        <dbReference type="HAMAP-Rule" id="MF_00500"/>
    </source>
</evidence>
<evidence type="ECO:0000256" key="2">
    <source>
        <dbReference type="SAM" id="MobiDB-lite"/>
    </source>
</evidence>
<evidence type="ECO:0000305" key="3"/>
<dbReference type="EMBL" id="CP000524">
    <property type="protein sequence ID" value="ABM45102.1"/>
    <property type="molecule type" value="Genomic_DNA"/>
</dbReference>
<dbReference type="RefSeq" id="WP_005768036.1">
    <property type="nucleotide sequence ID" value="NC_008783.1"/>
</dbReference>
<dbReference type="SMR" id="A1UU77"/>
<dbReference type="STRING" id="360095.BARBAKC583_1281"/>
<dbReference type="GeneID" id="4685104"/>
<dbReference type="KEGG" id="bbk:BARBAKC583_1281"/>
<dbReference type="PATRIC" id="fig|360095.6.peg.1256"/>
<dbReference type="eggNOG" id="COG0268">
    <property type="taxonomic scope" value="Bacteria"/>
</dbReference>
<dbReference type="HOGENOM" id="CLU_160655_3_0_5"/>
<dbReference type="OrthoDB" id="9807974at2"/>
<dbReference type="Proteomes" id="UP000000643">
    <property type="component" value="Chromosome"/>
</dbReference>
<dbReference type="GO" id="GO:0015935">
    <property type="term" value="C:small ribosomal subunit"/>
    <property type="evidence" value="ECO:0007669"/>
    <property type="project" value="TreeGrafter"/>
</dbReference>
<dbReference type="GO" id="GO:0070181">
    <property type="term" value="F:small ribosomal subunit rRNA binding"/>
    <property type="evidence" value="ECO:0007669"/>
    <property type="project" value="TreeGrafter"/>
</dbReference>
<dbReference type="GO" id="GO:0003735">
    <property type="term" value="F:structural constituent of ribosome"/>
    <property type="evidence" value="ECO:0007669"/>
    <property type="project" value="InterPro"/>
</dbReference>
<dbReference type="GO" id="GO:0006412">
    <property type="term" value="P:translation"/>
    <property type="evidence" value="ECO:0007669"/>
    <property type="project" value="UniProtKB-UniRule"/>
</dbReference>
<dbReference type="FunFam" id="1.20.58.110:FF:000001">
    <property type="entry name" value="30S ribosomal protein S20"/>
    <property type="match status" value="1"/>
</dbReference>
<dbReference type="Gene3D" id="1.20.58.110">
    <property type="entry name" value="Ribosomal protein S20"/>
    <property type="match status" value="1"/>
</dbReference>
<dbReference type="HAMAP" id="MF_00500">
    <property type="entry name" value="Ribosomal_bS20"/>
    <property type="match status" value="1"/>
</dbReference>
<dbReference type="InterPro" id="IPR002583">
    <property type="entry name" value="Ribosomal_bS20"/>
</dbReference>
<dbReference type="InterPro" id="IPR036510">
    <property type="entry name" value="Ribosomal_bS20_sf"/>
</dbReference>
<dbReference type="NCBIfam" id="TIGR00029">
    <property type="entry name" value="S20"/>
    <property type="match status" value="1"/>
</dbReference>
<dbReference type="PANTHER" id="PTHR33398">
    <property type="entry name" value="30S RIBOSOMAL PROTEIN S20"/>
    <property type="match status" value="1"/>
</dbReference>
<dbReference type="PANTHER" id="PTHR33398:SF1">
    <property type="entry name" value="SMALL RIBOSOMAL SUBUNIT PROTEIN BS20C"/>
    <property type="match status" value="1"/>
</dbReference>
<dbReference type="Pfam" id="PF01649">
    <property type="entry name" value="Ribosomal_S20p"/>
    <property type="match status" value="1"/>
</dbReference>
<dbReference type="SUPFAM" id="SSF46992">
    <property type="entry name" value="Ribosomal protein S20"/>
    <property type="match status" value="1"/>
</dbReference>
<protein>
    <recommendedName>
        <fullName evidence="1">Small ribosomal subunit protein bS20</fullName>
    </recommendedName>
    <alternativeName>
        <fullName evidence="3">30S ribosomal protein S20</fullName>
    </alternativeName>
</protein>
<proteinExistence type="inferred from homology"/>
<sequence length="88" mass="9707">MANTPSAKKAVNKIAKRTQVNKARRSRVRTFIRKFNDALAGGDKASAETAFRNCEPEIMRAVSKGVLHKNTAARKVSRLVKRLKAISA</sequence>
<keyword id="KW-0687">Ribonucleoprotein</keyword>
<keyword id="KW-0689">Ribosomal protein</keyword>
<keyword id="KW-0694">RNA-binding</keyword>
<keyword id="KW-0699">rRNA-binding</keyword>
<comment type="function">
    <text evidence="1">Binds directly to 16S ribosomal RNA.</text>
</comment>
<comment type="similarity">
    <text evidence="1">Belongs to the bacterial ribosomal protein bS20 family.</text>
</comment>
<accession>A1UU77</accession>
<organism>
    <name type="scientific">Bartonella bacilliformis (strain ATCC 35685 / KC583 / Herrer 020/F12,63)</name>
    <dbReference type="NCBI Taxonomy" id="360095"/>
    <lineage>
        <taxon>Bacteria</taxon>
        <taxon>Pseudomonadati</taxon>
        <taxon>Pseudomonadota</taxon>
        <taxon>Alphaproteobacteria</taxon>
        <taxon>Hyphomicrobiales</taxon>
        <taxon>Bartonellaceae</taxon>
        <taxon>Bartonella</taxon>
    </lineage>
</organism>
<gene>
    <name evidence="1" type="primary">rpsT</name>
    <name type="ordered locus">BARBAKC583_1281</name>
</gene>